<comment type="function">
    <text evidence="3">Dual specificity isomerase that catalyzes the isomerization of both glucose-6-phosphate and mannose-6-phosphate to fructose-6-phosphate with nearly similar catalytic efficiency (PubMed:39208883). Also catalyzes the epimerization of mannose 6-phosphate to glucose 6-phosphate but the rate of epimerization reaction is 20-fold lower than that of isomerization reaction (PubMed:39208883).</text>
</comment>
<comment type="catalytic activity">
    <reaction evidence="3">
        <text>alpha-D-glucose 6-phosphate = beta-D-fructose 6-phosphate</text>
        <dbReference type="Rhea" id="RHEA:11816"/>
        <dbReference type="ChEBI" id="CHEBI:57634"/>
        <dbReference type="ChEBI" id="CHEBI:58225"/>
        <dbReference type="EC" id="5.3.1.9"/>
    </reaction>
</comment>
<comment type="catalytic activity">
    <reaction evidence="3">
        <text>D-mannose 6-phosphate = D-fructose 6-phosphate</text>
        <dbReference type="Rhea" id="RHEA:12356"/>
        <dbReference type="ChEBI" id="CHEBI:58735"/>
        <dbReference type="ChEBI" id="CHEBI:61527"/>
        <dbReference type="EC" id="5.3.1.8"/>
    </reaction>
</comment>
<comment type="activity regulation">
    <text evidence="3">Presence or absence of metal ions or EDTA does not significantly affect the phosphoglucose isomerase activity.</text>
</comment>
<comment type="biophysicochemical properties">
    <kinetics>
        <KM evidence="3">0.33 mM for glucose 6-phosphate</KM>
        <KM evidence="3">0.34 mM for mannose 6-phosphate</KM>
        <KM evidence="3">0.29 mM for fructose 6-phosphate</KM>
        <Vmax evidence="3">290.0 umol/min/mg enzyme with glucose 6-phosphate as substrate</Vmax>
        <Vmax evidence="3">235.0 umol/min/mg enzyme with mannose 6-phosphate as substrate</Vmax>
        <Vmax evidence="3">240.0 umol/min/mg enzyme with fructose 6-phosphate as substrate</Vmax>
        <text evidence="3">kcat is 315 sec(-1) with glucose 6-phosphate as substrate. kcat is 240 sec(-1) with mannose 6-phosphate as substrate. kcat is 265 sec(-1) with fructose 6-phosphate as substrate.</text>
    </kinetics>
    <phDependence>
        <text evidence="3">Optimum pH is 8.5 (for phosphoglucose isomerase activity) (PubMed:39208883). Activity is reduced significantly below pH 8.0 and above 9.0 (PubMed:39208883).</text>
    </phDependence>
    <temperatureDependence>
        <text evidence="3">Optimum temperature is 90 degrees Celsius (for phosphoglucose isomerase activity) (PubMed:39208883). Displays high thermostability with a half-life of about 50 minutes at 100 degrees Celsius (PubMed:39208883).</text>
    </temperatureDependence>
</comment>
<comment type="subunit">
    <text evidence="3">Homodimer.</text>
</comment>
<comment type="similarity">
    <text evidence="5">Belongs to the PGI/PMI family.</text>
</comment>
<accession>A3MTR6</accession>
<organism>
    <name type="scientific">Pyrobaculum calidifontis (strain DSM 21063 / JCM 11548 / VA1)</name>
    <dbReference type="NCBI Taxonomy" id="410359"/>
    <lineage>
        <taxon>Archaea</taxon>
        <taxon>Thermoproteota</taxon>
        <taxon>Thermoprotei</taxon>
        <taxon>Thermoproteales</taxon>
        <taxon>Thermoproteaceae</taxon>
        <taxon>Pyrobaculum</taxon>
    </lineage>
</organism>
<evidence type="ECO:0000250" key="1">
    <source>
        <dbReference type="UniProtKB" id="Q8ZWV0"/>
    </source>
</evidence>
<evidence type="ECO:0000255" key="2">
    <source>
        <dbReference type="PROSITE-ProRule" id="PRU00797"/>
    </source>
</evidence>
<evidence type="ECO:0000269" key="3">
    <source>
    </source>
</evidence>
<evidence type="ECO:0000303" key="4">
    <source>
    </source>
</evidence>
<evidence type="ECO:0000305" key="5"/>
<evidence type="ECO:0000312" key="6">
    <source>
        <dbReference type="EMBL" id="ABO08033.1"/>
    </source>
</evidence>
<name>PGMI_PYRCJ</name>
<feature type="chain" id="PRO_0000461718" description="Bifunctional phosphoglucose/phosphomannose isomerase">
    <location>
        <begin position="1"/>
        <end position="299"/>
    </location>
</feature>
<feature type="domain" description="SIS" evidence="2">
    <location>
        <begin position="27"/>
        <end position="177"/>
    </location>
</feature>
<feature type="active site" description="Proton acceptor" evidence="1">
    <location>
        <position position="200"/>
    </location>
</feature>
<feature type="active site" description="Proton donor" evidence="1">
    <location>
        <position position="216"/>
    </location>
</feature>
<feature type="active site" description="Proton acceptor" evidence="1">
    <location>
        <position position="295"/>
    </location>
</feature>
<feature type="binding site" evidence="1">
    <location>
        <position position="44"/>
    </location>
    <ligand>
        <name>D-fructose 6-phosphate</name>
        <dbReference type="ChEBI" id="CHEBI:61527"/>
    </ligand>
</feature>
<feature type="binding site" evidence="1">
    <location>
        <position position="45"/>
    </location>
    <ligand>
        <name>D-fructose 6-phosphate</name>
        <dbReference type="ChEBI" id="CHEBI:61527"/>
    </ligand>
</feature>
<feature type="binding site" evidence="1">
    <location>
        <position position="84"/>
    </location>
    <ligand>
        <name>D-fructose 6-phosphate</name>
        <dbReference type="ChEBI" id="CHEBI:61527"/>
    </ligand>
</feature>
<feature type="binding site" evidence="1">
    <location>
        <position position="86"/>
    </location>
    <ligand>
        <name>D-fructose 6-phosphate</name>
        <dbReference type="ChEBI" id="CHEBI:61527"/>
    </ligand>
</feature>
<feature type="binding site" evidence="1">
    <location>
        <position position="89"/>
    </location>
    <ligand>
        <name>D-fructose 6-phosphate</name>
        <dbReference type="ChEBI" id="CHEBI:61527"/>
    </ligand>
</feature>
<feature type="binding site" evidence="1">
    <location>
        <position position="132"/>
    </location>
    <ligand>
        <name>D-fructose 6-phosphate</name>
        <dbReference type="ChEBI" id="CHEBI:61527"/>
    </ligand>
</feature>
<feature type="binding site" evidence="1">
    <location>
        <position position="216"/>
    </location>
    <ligand>
        <name>D-fructose 6-phosphate</name>
        <dbReference type="ChEBI" id="CHEBI:61527"/>
    </ligand>
</feature>
<feature type="binding site" evidence="1">
    <location>
        <position position="295"/>
    </location>
    <ligand>
        <name>D-fructose 6-phosphate</name>
        <dbReference type="ChEBI" id="CHEBI:61527"/>
    </ligand>
</feature>
<protein>
    <recommendedName>
        <fullName evidence="4">Bifunctional phosphoglucose/phosphomannose isomerase</fullName>
        <shortName evidence="5">Bifunctional PGI/PMI</shortName>
        <ecNumber evidence="3">5.3.1.8</ecNumber>
        <ecNumber evidence="3">5.3.1.9</ecNumber>
    </recommendedName>
    <alternativeName>
        <fullName evidence="4">Glucose-6-phosphate isomerase</fullName>
        <shortName evidence="5">GPI</shortName>
    </alternativeName>
    <alternativeName>
        <fullName evidence="5">Mannose-6-phosphate isomerase</fullName>
    </alternativeName>
</protein>
<keyword id="KW-0119">Carbohydrate metabolism</keyword>
<keyword id="KW-0413">Isomerase</keyword>
<sequence length="299" mass="33458">MLNDYLQWEKFILRGVEFPTRYRVDGDEVEITPSSRLYVSGMGGSGVVGDLIRDFSIVWNWDVEVTVVKDYFLRARDGLLIAVSYSGNTVETLYSVEYAKKRRIPTVAITTGGKLAQMGVPTIIIPKASAPRAALPQMLTAALHVVRKVYGIPIEIPEALEPPNDPLIHKLMEDFQKRPTIVAPETMRGVAYRVKNEFNENAKIEPSVEILPEAHHNWIEGSERPIVALTSPHIPREHQERVKATLEILGGTLYVVEMSTRGVLTFLREVGVASIKLAESRGVNPLATPRIEALKRRLQ</sequence>
<gene>
    <name evidence="6" type="ordered locus">Pcal_0606</name>
</gene>
<dbReference type="EC" id="5.3.1.8" evidence="3"/>
<dbReference type="EC" id="5.3.1.9" evidence="3"/>
<dbReference type="EMBL" id="CP000561">
    <property type="protein sequence ID" value="ABO08033.1"/>
    <property type="molecule type" value="Genomic_DNA"/>
</dbReference>
<dbReference type="RefSeq" id="WP_011849291.1">
    <property type="nucleotide sequence ID" value="NC_009073.1"/>
</dbReference>
<dbReference type="STRING" id="410359.Pcal_0606"/>
<dbReference type="GeneID" id="4909068"/>
<dbReference type="KEGG" id="pcl:Pcal_0606"/>
<dbReference type="eggNOG" id="arCOG00052">
    <property type="taxonomic scope" value="Archaea"/>
</dbReference>
<dbReference type="HOGENOM" id="CLU_059687_0_1_2"/>
<dbReference type="OrthoDB" id="10151at2157"/>
<dbReference type="Proteomes" id="UP000001431">
    <property type="component" value="Chromosome"/>
</dbReference>
<dbReference type="GO" id="GO:0097367">
    <property type="term" value="F:carbohydrate derivative binding"/>
    <property type="evidence" value="ECO:0007669"/>
    <property type="project" value="InterPro"/>
</dbReference>
<dbReference type="GO" id="GO:0004347">
    <property type="term" value="F:glucose-6-phosphate isomerase activity"/>
    <property type="evidence" value="ECO:0007669"/>
    <property type="project" value="UniProtKB-EC"/>
</dbReference>
<dbReference type="GO" id="GO:0004476">
    <property type="term" value="F:mannose-6-phosphate isomerase activity"/>
    <property type="evidence" value="ECO:0007669"/>
    <property type="project" value="UniProtKB-EC"/>
</dbReference>
<dbReference type="GO" id="GO:1901135">
    <property type="term" value="P:carbohydrate derivative metabolic process"/>
    <property type="evidence" value="ECO:0007669"/>
    <property type="project" value="InterPro"/>
</dbReference>
<dbReference type="GO" id="GO:0005975">
    <property type="term" value="P:carbohydrate metabolic process"/>
    <property type="evidence" value="ECO:0007669"/>
    <property type="project" value="InterPro"/>
</dbReference>
<dbReference type="CDD" id="cd05637">
    <property type="entry name" value="SIS_PGI_PMI_2"/>
    <property type="match status" value="1"/>
</dbReference>
<dbReference type="Gene3D" id="3.40.50.10490">
    <property type="entry name" value="Glucose-6-phosphate isomerase like protein, domain 1"/>
    <property type="match status" value="2"/>
</dbReference>
<dbReference type="InterPro" id="IPR019490">
    <property type="entry name" value="Glu6P/Mann6P_isomerase_C"/>
</dbReference>
<dbReference type="InterPro" id="IPR001347">
    <property type="entry name" value="SIS_dom"/>
</dbReference>
<dbReference type="InterPro" id="IPR046348">
    <property type="entry name" value="SIS_dom_sf"/>
</dbReference>
<dbReference type="NCBIfam" id="TIGR02128">
    <property type="entry name" value="G6PI_arch"/>
    <property type="match status" value="1"/>
</dbReference>
<dbReference type="Pfam" id="PF10432">
    <property type="entry name" value="bact-PGI_C"/>
    <property type="match status" value="1"/>
</dbReference>
<dbReference type="SUPFAM" id="SSF53697">
    <property type="entry name" value="SIS domain"/>
    <property type="match status" value="1"/>
</dbReference>
<dbReference type="PROSITE" id="PS51464">
    <property type="entry name" value="SIS"/>
    <property type="match status" value="1"/>
</dbReference>
<proteinExistence type="evidence at protein level"/>
<reference key="1">
    <citation type="submission" date="2007-02" db="EMBL/GenBank/DDBJ databases">
        <title>Complete sequence of Pyrobaculum calidifontis JCM 11548.</title>
        <authorList>
            <consortium name="US DOE Joint Genome Institute"/>
            <person name="Copeland A."/>
            <person name="Lucas S."/>
            <person name="Lapidus A."/>
            <person name="Barry K."/>
            <person name="Glavina del Rio T."/>
            <person name="Dalin E."/>
            <person name="Tice H."/>
            <person name="Pitluck S."/>
            <person name="Chain P."/>
            <person name="Malfatti S."/>
            <person name="Shin M."/>
            <person name="Vergez L."/>
            <person name="Schmutz J."/>
            <person name="Larimer F."/>
            <person name="Land M."/>
            <person name="Hauser L."/>
            <person name="Kyrpides N."/>
            <person name="Mikhailova N."/>
            <person name="Cozen A.E."/>
            <person name="Fitz-Gibbon S.T."/>
            <person name="House C.H."/>
            <person name="Saltikov C."/>
            <person name="Lowe T.M."/>
            <person name="Richardson P."/>
        </authorList>
    </citation>
    <scope>NUCLEOTIDE SEQUENCE [LARGE SCALE GENOMIC DNA]</scope>
    <source>
        <strain>DSM 21063 / JCM 11548 / VA1</strain>
    </source>
</reference>
<reference key="2">
    <citation type="journal article" date="2024" name="Int. J. Biol. Macromol.">
        <title>Structural and functional investigations of Pcal_0606, a bifunctional phosphoglucose/phosphomannose isomerase from Pyrobaculum calidifontis.</title>
        <authorList>
            <person name="Maqsood A."/>
            <person name="Shakir N.A."/>
            <person name="Aslam M."/>
            <person name="Rahman M."/>
            <person name="Rashid N."/>
        </authorList>
    </citation>
    <scope>FUNCTION</scope>
    <scope>CATALYTIC ACTIVITY</scope>
    <scope>ACTIVITY REGULATION</scope>
    <scope>BIOPHYSICOCHEMICAL PROPERTIES</scope>
    <scope>SUBUNIT</scope>
    <source>
        <strain>DSM 21063 / JCM 11548 / VA1</strain>
    </source>
</reference>